<evidence type="ECO:0000255" key="1">
    <source>
        <dbReference type="HAMAP-Rule" id="MF_00823"/>
    </source>
</evidence>
<evidence type="ECO:0000255" key="2">
    <source>
        <dbReference type="PROSITE-ProRule" id="PRU01137"/>
    </source>
</evidence>
<proteinExistence type="inferred from homology"/>
<keyword id="KW-0067">ATP-binding</keyword>
<keyword id="KW-0963">Cytoplasm</keyword>
<keyword id="KW-0275">Fatty acid biosynthesis</keyword>
<keyword id="KW-0276">Fatty acid metabolism</keyword>
<keyword id="KW-0444">Lipid biosynthesis</keyword>
<keyword id="KW-0443">Lipid metabolism</keyword>
<keyword id="KW-0547">Nucleotide-binding</keyword>
<keyword id="KW-1185">Reference proteome</keyword>
<keyword id="KW-0808">Transferase</keyword>
<gene>
    <name evidence="1" type="primary">accA</name>
    <name type="ordered locus">Plut_1956</name>
</gene>
<protein>
    <recommendedName>
        <fullName evidence="1">Acetyl-coenzyme A carboxylase carboxyl transferase subunit alpha</fullName>
        <shortName evidence="1">ACCase subunit alpha</shortName>
        <shortName evidence="1">Acetyl-CoA carboxylase carboxyltransferase subunit alpha</shortName>
        <ecNumber evidence="1">2.1.3.15</ecNumber>
    </recommendedName>
</protein>
<reference key="1">
    <citation type="submission" date="2005-08" db="EMBL/GenBank/DDBJ databases">
        <title>Complete sequence of Pelodictyon luteolum DSM 273.</title>
        <authorList>
            <consortium name="US DOE Joint Genome Institute"/>
            <person name="Copeland A."/>
            <person name="Lucas S."/>
            <person name="Lapidus A."/>
            <person name="Barry K."/>
            <person name="Detter J.C."/>
            <person name="Glavina T."/>
            <person name="Hammon N."/>
            <person name="Israni S."/>
            <person name="Pitluck S."/>
            <person name="Bryant D."/>
            <person name="Schmutz J."/>
            <person name="Larimer F."/>
            <person name="Land M."/>
            <person name="Kyrpides N."/>
            <person name="Ivanova N."/>
            <person name="Richardson P."/>
        </authorList>
    </citation>
    <scope>NUCLEOTIDE SEQUENCE [LARGE SCALE GENOMIC DNA]</scope>
    <source>
        <strain>DSM 273 / BCRC 81028 / 2530</strain>
    </source>
</reference>
<feature type="chain" id="PRO_1000062646" description="Acetyl-coenzyme A carboxylase carboxyl transferase subunit alpha">
    <location>
        <begin position="1"/>
        <end position="335"/>
    </location>
</feature>
<feature type="domain" description="CoA carboxyltransferase C-terminal" evidence="2">
    <location>
        <begin position="48"/>
        <end position="308"/>
    </location>
</feature>
<sequence>MATNVVLDFERPVVELEAKLNEMRECLRSSSREQAPVESDALSKEIETLEKKVDALRRSIYKNLTRWQKVQLARHPERPYTLDYIYMMTCDFVELAGDRHFSDDKAIVGGFARLEDRASGYSQPVMVIGHQKGRDTKSNLYRNFGMAQPEGYRKALRLMKLAEKFRKPVITLIDTPGAFPGIEAEERGQAEAIARNLYEMAKLTVPVIVVIIGEGASGGAIGLGVGDRILMAENSWYSVISPESCSSILWRSWNYKEQAAEALQLTAEDLLKQGIIDRIIPEPMGGAHTDPEAMASTLKGMLIEELKALMPVPEKELVNNRIEKFSAMGVWNDEG</sequence>
<accession>Q3B1I3</accession>
<organism>
    <name type="scientific">Chlorobium luteolum (strain DSM 273 / BCRC 81028 / 2530)</name>
    <name type="common">Pelodictyon luteolum</name>
    <dbReference type="NCBI Taxonomy" id="319225"/>
    <lineage>
        <taxon>Bacteria</taxon>
        <taxon>Pseudomonadati</taxon>
        <taxon>Chlorobiota</taxon>
        <taxon>Chlorobiia</taxon>
        <taxon>Chlorobiales</taxon>
        <taxon>Chlorobiaceae</taxon>
        <taxon>Chlorobium/Pelodictyon group</taxon>
        <taxon>Pelodictyon</taxon>
    </lineage>
</organism>
<dbReference type="EC" id="2.1.3.15" evidence="1"/>
<dbReference type="EMBL" id="CP000096">
    <property type="protein sequence ID" value="ABB24798.1"/>
    <property type="molecule type" value="Genomic_DNA"/>
</dbReference>
<dbReference type="RefSeq" id="WP_011358668.1">
    <property type="nucleotide sequence ID" value="NC_007512.1"/>
</dbReference>
<dbReference type="SMR" id="Q3B1I3"/>
<dbReference type="STRING" id="319225.Plut_1956"/>
<dbReference type="KEGG" id="plt:Plut_1956"/>
<dbReference type="eggNOG" id="COG0825">
    <property type="taxonomic scope" value="Bacteria"/>
</dbReference>
<dbReference type="HOGENOM" id="CLU_015486_0_2_10"/>
<dbReference type="OrthoDB" id="9808023at2"/>
<dbReference type="UniPathway" id="UPA00655">
    <property type="reaction ID" value="UER00711"/>
</dbReference>
<dbReference type="Proteomes" id="UP000002709">
    <property type="component" value="Chromosome"/>
</dbReference>
<dbReference type="GO" id="GO:0009317">
    <property type="term" value="C:acetyl-CoA carboxylase complex"/>
    <property type="evidence" value="ECO:0007669"/>
    <property type="project" value="InterPro"/>
</dbReference>
<dbReference type="GO" id="GO:0003989">
    <property type="term" value="F:acetyl-CoA carboxylase activity"/>
    <property type="evidence" value="ECO:0007669"/>
    <property type="project" value="InterPro"/>
</dbReference>
<dbReference type="GO" id="GO:0005524">
    <property type="term" value="F:ATP binding"/>
    <property type="evidence" value="ECO:0007669"/>
    <property type="project" value="UniProtKB-KW"/>
</dbReference>
<dbReference type="GO" id="GO:0016743">
    <property type="term" value="F:carboxyl- or carbamoyltransferase activity"/>
    <property type="evidence" value="ECO:0007669"/>
    <property type="project" value="UniProtKB-UniRule"/>
</dbReference>
<dbReference type="GO" id="GO:0006633">
    <property type="term" value="P:fatty acid biosynthetic process"/>
    <property type="evidence" value="ECO:0007669"/>
    <property type="project" value="UniProtKB-KW"/>
</dbReference>
<dbReference type="GO" id="GO:2001295">
    <property type="term" value="P:malonyl-CoA biosynthetic process"/>
    <property type="evidence" value="ECO:0007669"/>
    <property type="project" value="UniProtKB-UniRule"/>
</dbReference>
<dbReference type="Gene3D" id="3.90.226.10">
    <property type="entry name" value="2-enoyl-CoA Hydratase, Chain A, domain 1"/>
    <property type="match status" value="1"/>
</dbReference>
<dbReference type="HAMAP" id="MF_00823">
    <property type="entry name" value="AcetylCoA_CT_alpha"/>
    <property type="match status" value="1"/>
</dbReference>
<dbReference type="InterPro" id="IPR001095">
    <property type="entry name" value="Acetyl_CoA_COase_a_su"/>
</dbReference>
<dbReference type="InterPro" id="IPR029045">
    <property type="entry name" value="ClpP/crotonase-like_dom_sf"/>
</dbReference>
<dbReference type="InterPro" id="IPR011763">
    <property type="entry name" value="COA_CT_C"/>
</dbReference>
<dbReference type="NCBIfam" id="TIGR00513">
    <property type="entry name" value="accA"/>
    <property type="match status" value="1"/>
</dbReference>
<dbReference type="NCBIfam" id="NF041504">
    <property type="entry name" value="AccA_sub"/>
    <property type="match status" value="1"/>
</dbReference>
<dbReference type="NCBIfam" id="NF004344">
    <property type="entry name" value="PRK05724.1"/>
    <property type="match status" value="1"/>
</dbReference>
<dbReference type="PANTHER" id="PTHR42853">
    <property type="entry name" value="ACETYL-COENZYME A CARBOXYLASE CARBOXYL TRANSFERASE SUBUNIT ALPHA"/>
    <property type="match status" value="1"/>
</dbReference>
<dbReference type="PANTHER" id="PTHR42853:SF3">
    <property type="entry name" value="ACETYL-COENZYME A CARBOXYLASE CARBOXYL TRANSFERASE SUBUNIT ALPHA, CHLOROPLASTIC"/>
    <property type="match status" value="1"/>
</dbReference>
<dbReference type="Pfam" id="PF03255">
    <property type="entry name" value="ACCA"/>
    <property type="match status" value="1"/>
</dbReference>
<dbReference type="PRINTS" id="PR01069">
    <property type="entry name" value="ACCCTRFRASEA"/>
</dbReference>
<dbReference type="SUPFAM" id="SSF52096">
    <property type="entry name" value="ClpP/crotonase"/>
    <property type="match status" value="1"/>
</dbReference>
<dbReference type="PROSITE" id="PS50989">
    <property type="entry name" value="COA_CT_CTER"/>
    <property type="match status" value="1"/>
</dbReference>
<name>ACCA_CHLL3</name>
<comment type="function">
    <text evidence="1">Component of the acetyl coenzyme A carboxylase (ACC) complex. First, biotin carboxylase catalyzes the carboxylation of biotin on its carrier protein (BCCP) and then the CO(2) group is transferred by the carboxyltransferase to acetyl-CoA to form malonyl-CoA.</text>
</comment>
<comment type="catalytic activity">
    <reaction evidence="1">
        <text>N(6)-carboxybiotinyl-L-lysyl-[protein] + acetyl-CoA = N(6)-biotinyl-L-lysyl-[protein] + malonyl-CoA</text>
        <dbReference type="Rhea" id="RHEA:54728"/>
        <dbReference type="Rhea" id="RHEA-COMP:10505"/>
        <dbReference type="Rhea" id="RHEA-COMP:10506"/>
        <dbReference type="ChEBI" id="CHEBI:57288"/>
        <dbReference type="ChEBI" id="CHEBI:57384"/>
        <dbReference type="ChEBI" id="CHEBI:83144"/>
        <dbReference type="ChEBI" id="CHEBI:83145"/>
        <dbReference type="EC" id="2.1.3.15"/>
    </reaction>
</comment>
<comment type="pathway">
    <text evidence="1">Lipid metabolism; malonyl-CoA biosynthesis; malonyl-CoA from acetyl-CoA: step 1/1.</text>
</comment>
<comment type="subunit">
    <text evidence="1">Acetyl-CoA carboxylase is a heterohexamer composed of biotin carboxyl carrier protein (AccB), biotin carboxylase (AccC) and two subunits each of ACCase subunit alpha (AccA) and ACCase subunit beta (AccD).</text>
</comment>
<comment type="subcellular location">
    <subcellularLocation>
        <location evidence="1">Cytoplasm</location>
    </subcellularLocation>
</comment>
<comment type="similarity">
    <text evidence="1">Belongs to the AccA family.</text>
</comment>